<keyword id="KW-1185">Reference proteome</keyword>
<sequence length="315" mass="35918">MLRFFQMTWTTALYFLVFLSFGNSMPQKSKPFWLSADINSIEWQEGCLTTVLCSHPRFQLLKDLLPISERASISWPVTEQFLEHTVAPFVSYWPSGRIEDVSLSAQVVGVDTTYGFPRTCDQTPAVRIFPVDLYELAPESAENKTIHLKAKCFEATITVTKHVERCPWCPDPQEILISNEIPQQINLQQSALESGIHSFVGIFYKSSTSESLQVGICLLAALAFFASLAFIIMLSVYLKSKKSSRRNVSVNVQPRLIPYNSRCDDYDTRYDMPWDQQRPLTYWMSKSTVTSPNSLRSEAYQTYRIPPPPNFAPPV</sequence>
<reference key="1">
    <citation type="journal article" date="1998" name="Science">
        <title>Genome sequence of the nematode C. elegans: a platform for investigating biology.</title>
        <authorList>
            <consortium name="The C. elegans sequencing consortium"/>
        </authorList>
    </citation>
    <scope>NUCLEOTIDE SEQUENCE [LARGE SCALE GENOMIC DNA]</scope>
    <source>
        <strain>Bristol N2</strain>
    </source>
</reference>
<organism>
    <name type="scientific">Caenorhabditis elegans</name>
    <dbReference type="NCBI Taxonomy" id="6239"/>
    <lineage>
        <taxon>Eukaryota</taxon>
        <taxon>Metazoa</taxon>
        <taxon>Ecdysozoa</taxon>
        <taxon>Nematoda</taxon>
        <taxon>Chromadorea</taxon>
        <taxon>Rhabditida</taxon>
        <taxon>Rhabditina</taxon>
        <taxon>Rhabditomorpha</taxon>
        <taxon>Rhabditoidea</taxon>
        <taxon>Rhabditidae</taxon>
        <taxon>Peloderinae</taxon>
        <taxon>Caenorhabditis</taxon>
    </lineage>
</organism>
<proteinExistence type="predicted"/>
<gene>
    <name type="ORF">C05B5.4</name>
</gene>
<name>YKO4_CAEEL</name>
<feature type="chain" id="PRO_0000065140" description="Uncharacterized protein C05B5.4">
    <location>
        <begin position="1"/>
        <end position="315"/>
    </location>
</feature>
<accession>P34292</accession>
<dbReference type="EMBL" id="Z32679">
    <property type="protein sequence ID" value="CAA83591.1"/>
    <property type="molecule type" value="Genomic_DNA"/>
</dbReference>
<dbReference type="PIR" id="B88571">
    <property type="entry name" value="B88571"/>
</dbReference>
<dbReference type="PIR" id="S43573">
    <property type="entry name" value="S43573"/>
</dbReference>
<dbReference type="RefSeq" id="NP_499216.1">
    <property type="nucleotide sequence ID" value="NM_066815.2"/>
</dbReference>
<dbReference type="FunCoup" id="P34292">
    <property type="interactions" value="86"/>
</dbReference>
<dbReference type="PaxDb" id="6239-C05B5.4"/>
<dbReference type="EnsemblMetazoa" id="C05B5.4.1">
    <property type="protein sequence ID" value="C05B5.4.1"/>
    <property type="gene ID" value="WBGene00007321"/>
</dbReference>
<dbReference type="GeneID" id="182246"/>
<dbReference type="KEGG" id="cel:CELE_C05B5.4"/>
<dbReference type="UCSC" id="C05B5.4">
    <property type="organism name" value="c. elegans"/>
</dbReference>
<dbReference type="AGR" id="WB:WBGene00007321"/>
<dbReference type="CTD" id="182246"/>
<dbReference type="WormBase" id="C05B5.4">
    <property type="protein sequence ID" value="CE00880"/>
    <property type="gene ID" value="WBGene00007321"/>
</dbReference>
<dbReference type="eggNOG" id="ENOG502SRNW">
    <property type="taxonomic scope" value="Eukaryota"/>
</dbReference>
<dbReference type="GeneTree" id="ENSGT00970000196119"/>
<dbReference type="HOGENOM" id="CLU_063540_0_0_1"/>
<dbReference type="InParanoid" id="P34292"/>
<dbReference type="OMA" id="YWMSKST"/>
<dbReference type="OrthoDB" id="5862752at2759"/>
<dbReference type="PhylomeDB" id="P34292"/>
<dbReference type="PRO" id="PR:P34292"/>
<dbReference type="Proteomes" id="UP000001940">
    <property type="component" value="Chromosome III"/>
</dbReference>
<dbReference type="Bgee" id="WBGene00007321">
    <property type="expression patterns" value="Expressed in embryo and 4 other cell types or tissues"/>
</dbReference>
<dbReference type="InterPro" id="IPR040426">
    <property type="entry name" value="C05B5.4-like"/>
</dbReference>
<dbReference type="PANTHER" id="PTHR38626:SF1">
    <property type="entry name" value="PROTEIN CBG09928"/>
    <property type="match status" value="1"/>
</dbReference>
<dbReference type="PANTHER" id="PTHR38626">
    <property type="entry name" value="SKN-1 DEPENDENT ZYGOTIC TRANSCRIPT-RELATED"/>
    <property type="match status" value="1"/>
</dbReference>
<dbReference type="Pfam" id="PF25330">
    <property type="entry name" value="C2_nem"/>
    <property type="match status" value="1"/>
</dbReference>
<protein>
    <recommendedName>
        <fullName>Uncharacterized protein C05B5.4</fullName>
    </recommendedName>
</protein>